<proteinExistence type="inferred from homology"/>
<name>SYGB_ACTSZ</name>
<reference key="1">
    <citation type="journal article" date="2010" name="BMC Genomics">
        <title>A genomic perspective on the potential of Actinobacillus succinogenes for industrial succinate production.</title>
        <authorList>
            <person name="McKinlay J.B."/>
            <person name="Laivenieks M."/>
            <person name="Schindler B.D."/>
            <person name="McKinlay A.A."/>
            <person name="Siddaramappa S."/>
            <person name="Challacombe J.F."/>
            <person name="Lowry S.R."/>
            <person name="Clum A."/>
            <person name="Lapidus A.L."/>
            <person name="Burkhart K.B."/>
            <person name="Harkins V."/>
            <person name="Vieille C."/>
        </authorList>
    </citation>
    <scope>NUCLEOTIDE SEQUENCE [LARGE SCALE GENOMIC DNA]</scope>
    <source>
        <strain>ATCC 55618 / DSM 22257 / CCUG 43843 / 130Z</strain>
    </source>
</reference>
<keyword id="KW-0030">Aminoacyl-tRNA synthetase</keyword>
<keyword id="KW-0067">ATP-binding</keyword>
<keyword id="KW-0963">Cytoplasm</keyword>
<keyword id="KW-0436">Ligase</keyword>
<keyword id="KW-0547">Nucleotide-binding</keyword>
<keyword id="KW-0648">Protein biosynthesis</keyword>
<keyword id="KW-1185">Reference proteome</keyword>
<dbReference type="EC" id="6.1.1.14" evidence="1"/>
<dbReference type="EMBL" id="CP000746">
    <property type="protein sequence ID" value="ABR73788.1"/>
    <property type="molecule type" value="Genomic_DNA"/>
</dbReference>
<dbReference type="RefSeq" id="WP_012072173.1">
    <property type="nucleotide sequence ID" value="NC_009655.1"/>
</dbReference>
<dbReference type="SMR" id="A6VLE1"/>
<dbReference type="STRING" id="339671.Asuc_0410"/>
<dbReference type="KEGG" id="asu:Asuc_0410"/>
<dbReference type="eggNOG" id="COG0751">
    <property type="taxonomic scope" value="Bacteria"/>
</dbReference>
<dbReference type="HOGENOM" id="CLU_007220_2_2_6"/>
<dbReference type="OrthoDB" id="9775440at2"/>
<dbReference type="Proteomes" id="UP000001114">
    <property type="component" value="Chromosome"/>
</dbReference>
<dbReference type="GO" id="GO:0005829">
    <property type="term" value="C:cytosol"/>
    <property type="evidence" value="ECO:0007669"/>
    <property type="project" value="TreeGrafter"/>
</dbReference>
<dbReference type="GO" id="GO:0004814">
    <property type="term" value="F:arginine-tRNA ligase activity"/>
    <property type="evidence" value="ECO:0007669"/>
    <property type="project" value="InterPro"/>
</dbReference>
<dbReference type="GO" id="GO:0005524">
    <property type="term" value="F:ATP binding"/>
    <property type="evidence" value="ECO:0007669"/>
    <property type="project" value="UniProtKB-UniRule"/>
</dbReference>
<dbReference type="GO" id="GO:0004820">
    <property type="term" value="F:glycine-tRNA ligase activity"/>
    <property type="evidence" value="ECO:0007669"/>
    <property type="project" value="UniProtKB-UniRule"/>
</dbReference>
<dbReference type="GO" id="GO:0006420">
    <property type="term" value="P:arginyl-tRNA aminoacylation"/>
    <property type="evidence" value="ECO:0007669"/>
    <property type="project" value="InterPro"/>
</dbReference>
<dbReference type="GO" id="GO:0006426">
    <property type="term" value="P:glycyl-tRNA aminoacylation"/>
    <property type="evidence" value="ECO:0007669"/>
    <property type="project" value="UniProtKB-UniRule"/>
</dbReference>
<dbReference type="HAMAP" id="MF_00255">
    <property type="entry name" value="Gly_tRNA_synth_beta"/>
    <property type="match status" value="1"/>
</dbReference>
<dbReference type="InterPro" id="IPR008909">
    <property type="entry name" value="DALR_anticod-bd"/>
</dbReference>
<dbReference type="InterPro" id="IPR015944">
    <property type="entry name" value="Gly-tRNA-synth_bsu"/>
</dbReference>
<dbReference type="InterPro" id="IPR006194">
    <property type="entry name" value="Gly-tRNA-synth_heterodimer"/>
</dbReference>
<dbReference type="NCBIfam" id="TIGR00211">
    <property type="entry name" value="glyS"/>
    <property type="match status" value="1"/>
</dbReference>
<dbReference type="PANTHER" id="PTHR30075:SF2">
    <property type="entry name" value="GLYCINE--TRNA LIGASE, CHLOROPLASTIC_MITOCHONDRIAL 2"/>
    <property type="match status" value="1"/>
</dbReference>
<dbReference type="PANTHER" id="PTHR30075">
    <property type="entry name" value="GLYCYL-TRNA SYNTHETASE"/>
    <property type="match status" value="1"/>
</dbReference>
<dbReference type="Pfam" id="PF05746">
    <property type="entry name" value="DALR_1"/>
    <property type="match status" value="1"/>
</dbReference>
<dbReference type="Pfam" id="PF02092">
    <property type="entry name" value="tRNA_synt_2f"/>
    <property type="match status" value="1"/>
</dbReference>
<dbReference type="PRINTS" id="PR01045">
    <property type="entry name" value="TRNASYNTHGB"/>
</dbReference>
<dbReference type="SUPFAM" id="SSF109604">
    <property type="entry name" value="HD-domain/PDEase-like"/>
    <property type="match status" value="1"/>
</dbReference>
<dbReference type="PROSITE" id="PS50861">
    <property type="entry name" value="AA_TRNA_LIGASE_II_GLYAB"/>
    <property type="match status" value="1"/>
</dbReference>
<evidence type="ECO:0000255" key="1">
    <source>
        <dbReference type="HAMAP-Rule" id="MF_00255"/>
    </source>
</evidence>
<organism>
    <name type="scientific">Actinobacillus succinogenes (strain ATCC 55618 / DSM 22257 / CCUG 43843 / 130Z)</name>
    <dbReference type="NCBI Taxonomy" id="339671"/>
    <lineage>
        <taxon>Bacteria</taxon>
        <taxon>Pseudomonadati</taxon>
        <taxon>Pseudomonadota</taxon>
        <taxon>Gammaproteobacteria</taxon>
        <taxon>Pasteurellales</taxon>
        <taxon>Pasteurellaceae</taxon>
        <taxon>Actinobacillus</taxon>
    </lineage>
</organism>
<accession>A6VLE1</accession>
<feature type="chain" id="PRO_1000071878" description="Glycine--tRNA ligase beta subunit">
    <location>
        <begin position="1"/>
        <end position="689"/>
    </location>
</feature>
<gene>
    <name evidence="1" type="primary">glyS</name>
    <name type="ordered locus">Asuc_0410</name>
</gene>
<protein>
    <recommendedName>
        <fullName evidence="1">Glycine--tRNA ligase beta subunit</fullName>
        <ecNumber evidence="1">6.1.1.14</ecNumber>
    </recommendedName>
    <alternativeName>
        <fullName evidence="1">Glycyl-tRNA synthetase beta subunit</fullName>
        <shortName evidence="1">GlyRS</shortName>
    </alternativeName>
</protein>
<comment type="catalytic activity">
    <reaction evidence="1">
        <text>tRNA(Gly) + glycine + ATP = glycyl-tRNA(Gly) + AMP + diphosphate</text>
        <dbReference type="Rhea" id="RHEA:16013"/>
        <dbReference type="Rhea" id="RHEA-COMP:9664"/>
        <dbReference type="Rhea" id="RHEA-COMP:9683"/>
        <dbReference type="ChEBI" id="CHEBI:30616"/>
        <dbReference type="ChEBI" id="CHEBI:33019"/>
        <dbReference type="ChEBI" id="CHEBI:57305"/>
        <dbReference type="ChEBI" id="CHEBI:78442"/>
        <dbReference type="ChEBI" id="CHEBI:78522"/>
        <dbReference type="ChEBI" id="CHEBI:456215"/>
        <dbReference type="EC" id="6.1.1.14"/>
    </reaction>
</comment>
<comment type="subunit">
    <text evidence="1">Tetramer of two alpha and two beta subunits.</text>
</comment>
<comment type="subcellular location">
    <subcellularLocation>
        <location evidence="1">Cytoplasm</location>
    </subcellularLocation>
</comment>
<comment type="similarity">
    <text evidence="1">Belongs to the class-II aminoacyl-tRNA synthetase family.</text>
</comment>
<sequence>MTTENFFAEIGTEELPPKALKKLATAFAENVENELKQAGLAFDKVEWFAAPRRLAVKVLNLAANQPSKEIEKRGPAVSAAFDAEGKPTKAAEGWARGCGITVDQAERLVTDKGEWLVHRAVIEGQPTKNLMLDIIAKSLANLPIPKTMRWGDKNVQFVRPVHTVTLLLGGELIEGEILGIASGRTIRGHRFLGEREFQISHADQYPSLLEEKGCVIADFNKRREMILTKSQEKATALGGVADIEDDLLDEVTSLVEFPNVLTAKFEERFLAVPAEALVYTMKGDQKYFPIYDKEGKLLPHFIFVSNINPVDPMPIIEGNEKVVRPRLSDAEFFFNTDKKQRLEDLLPRLQTVLFQQQLGTLLDKTKRIQSLAGEIAGQIGADKAKAERAGLLSKCDLMTNMVFEFTDTQGVMGMHYARHDGEDEEVAVALNEQYMPRFAGDNLPNSLVASSVALADKFDTLTGIFGIGQAPKGSADPFALRRAALGALRIIVEKNLSLDLADLVKKSAALFGDKLTNANVVDDVVDFMLGRFRAWYQDGGIAVDVIQAVLARRPTKPADFDARVRAVSHFRTLDSAEALAAANKRVSNILAKVAGEIRSEIDRTLLLEAEEKALAEQVLALQSELAPVFAKGDYQTALDRLACLREVVDNFFDKVMVNAEDEKLRQNRQAMLNVLRNLFLQVADISLLQ</sequence>